<keyword id="KW-0284">Flavonoid biosynthesis</keyword>
<keyword id="KW-0325">Glycoprotein</keyword>
<keyword id="KW-0328">Glycosyltransferase</keyword>
<keyword id="KW-0732">Signal</keyword>
<keyword id="KW-0808">Transferase</keyword>
<accession>P0DO58</accession>
<evidence type="ECO:0000250" key="1">
    <source>
        <dbReference type="UniProtKB" id="A0A0A1HA03"/>
    </source>
</evidence>
<evidence type="ECO:0000250" key="2">
    <source>
        <dbReference type="UniProtKB" id="P51094"/>
    </source>
</evidence>
<evidence type="ECO:0000250" key="3">
    <source>
        <dbReference type="UniProtKB" id="Q9SBQ8"/>
    </source>
</evidence>
<evidence type="ECO:0000255" key="4"/>
<evidence type="ECO:0000255" key="5">
    <source>
        <dbReference type="PROSITE-ProRule" id="PRU00498"/>
    </source>
</evidence>
<evidence type="ECO:0000269" key="6">
    <source>
    </source>
</evidence>
<evidence type="ECO:0000303" key="7">
    <source>
    </source>
</evidence>
<evidence type="ECO:0000305" key="8"/>
<evidence type="ECO:0000305" key="9">
    <source>
    </source>
</evidence>
<dbReference type="EC" id="2.4.1.115" evidence="6"/>
<dbReference type="EC" id="2.4.1.294" evidence="6"/>
<dbReference type="SMR" id="P0DO58"/>
<dbReference type="UniPathway" id="UPA00009"/>
<dbReference type="GO" id="GO:0047213">
    <property type="term" value="F:anthocyanidin 3-O-glucosyltransferase activity"/>
    <property type="evidence" value="ECO:0000314"/>
    <property type="project" value="UniProtKB"/>
</dbReference>
<dbReference type="GO" id="GO:0080043">
    <property type="term" value="F:quercetin 3-O-glucosyltransferase activity"/>
    <property type="evidence" value="ECO:0007669"/>
    <property type="project" value="TreeGrafter"/>
</dbReference>
<dbReference type="GO" id="GO:0080044">
    <property type="term" value="F:quercetin 7-O-glucosyltransferase activity"/>
    <property type="evidence" value="ECO:0007669"/>
    <property type="project" value="TreeGrafter"/>
</dbReference>
<dbReference type="GO" id="GO:0009718">
    <property type="term" value="P:anthocyanin-containing compound biosynthetic process"/>
    <property type="evidence" value="ECO:0007669"/>
    <property type="project" value="UniProtKB-UniPathway"/>
</dbReference>
<dbReference type="GO" id="GO:0033485">
    <property type="term" value="P:cyanidin 3-O-glucoside biosynthetic process"/>
    <property type="evidence" value="ECO:0000314"/>
    <property type="project" value="UniProtKB"/>
</dbReference>
<dbReference type="GO" id="GO:0031542">
    <property type="term" value="P:positive regulation of anthocyanin biosynthetic process"/>
    <property type="evidence" value="ECO:0000314"/>
    <property type="project" value="UniProtKB"/>
</dbReference>
<dbReference type="CDD" id="cd03784">
    <property type="entry name" value="GT1_Gtf-like"/>
    <property type="match status" value="1"/>
</dbReference>
<dbReference type="FunFam" id="3.40.50.2000:FF:000060">
    <property type="entry name" value="Glycosyltransferase"/>
    <property type="match status" value="1"/>
</dbReference>
<dbReference type="FunFam" id="3.40.50.2000:FF:000129">
    <property type="entry name" value="Glycosyltransferase"/>
    <property type="match status" value="1"/>
</dbReference>
<dbReference type="Gene3D" id="3.40.50.2000">
    <property type="entry name" value="Glycogen Phosphorylase B"/>
    <property type="match status" value="2"/>
</dbReference>
<dbReference type="InterPro" id="IPR002213">
    <property type="entry name" value="UDP_glucos_trans"/>
</dbReference>
<dbReference type="InterPro" id="IPR035595">
    <property type="entry name" value="UDP_glycos_trans_CS"/>
</dbReference>
<dbReference type="PANTHER" id="PTHR11926">
    <property type="entry name" value="GLUCOSYL/GLUCURONOSYL TRANSFERASES"/>
    <property type="match status" value="1"/>
</dbReference>
<dbReference type="PANTHER" id="PTHR11926:SF1560">
    <property type="entry name" value="UDP-GLYCOSYLTRANSFERASE 74E1-RELATED"/>
    <property type="match status" value="1"/>
</dbReference>
<dbReference type="Pfam" id="PF00201">
    <property type="entry name" value="UDPGT"/>
    <property type="match status" value="1"/>
</dbReference>
<dbReference type="SUPFAM" id="SSF53756">
    <property type="entry name" value="UDP-Glycosyltransferase/glycogen phosphorylase"/>
    <property type="match status" value="1"/>
</dbReference>
<dbReference type="PROSITE" id="PS00375">
    <property type="entry name" value="UDPGT"/>
    <property type="match status" value="1"/>
</dbReference>
<name>F3GT1_RHODL</name>
<gene>
    <name evidence="7" type="primary">3GT1</name>
</gene>
<organism>
    <name type="scientific">Rhododendron delavayi</name>
    <name type="common">Rhododendron</name>
    <name type="synonym">Rhododendron arboreum subsp. delavayi</name>
    <dbReference type="NCBI Taxonomy" id="321363"/>
    <lineage>
        <taxon>Eukaryota</taxon>
        <taxon>Viridiplantae</taxon>
        <taxon>Streptophyta</taxon>
        <taxon>Embryophyta</taxon>
        <taxon>Tracheophyta</taxon>
        <taxon>Spermatophyta</taxon>
        <taxon>Magnoliopsida</taxon>
        <taxon>eudicotyledons</taxon>
        <taxon>Gunneridae</taxon>
        <taxon>Pentapetalae</taxon>
        <taxon>asterids</taxon>
        <taxon>Ericales</taxon>
        <taxon>Ericaceae</taxon>
        <taxon>Ericoideae</taxon>
        <taxon>Rhodoreae</taxon>
        <taxon>Rhododendron</taxon>
    </lineage>
</organism>
<protein>
    <recommendedName>
        <fullName evidence="8">Anthocyanidin 3-O-galactosyltransferase 3GT1</fullName>
        <ecNumber evidence="6">2.4.1.115</ecNumber>
        <ecNumber evidence="6">2.4.1.294</ecNumber>
    </recommendedName>
    <alternativeName>
        <fullName evidence="7">Flavonoid 3-O-glycosyltransferase 1</fullName>
        <shortName evidence="7">Rd3GT1</shortName>
    </alternativeName>
</protein>
<proteinExistence type="evidence at protein level"/>
<reference key="1">
    <citation type="journal article" date="2022" name="Front. Plant Sci.">
        <title>Characterization of two key flavonoid 3-O-glycosyltransferases involved in the formation of flower color in Rhododendron delavayi.</title>
        <authorList>
            <person name="Sun W."/>
            <person name="Sun S."/>
            <person name="Xu H."/>
            <person name="Wang Y."/>
            <person name="Chen Y."/>
            <person name="Xu X."/>
            <person name="Yi Y."/>
            <person name="Ju Z."/>
        </authorList>
    </citation>
    <scope>NUCLEOTIDE SEQUENCE [MRNA]</scope>
    <scope>FUNCTION</scope>
    <scope>CATALYTIC ACTIVITY</scope>
    <scope>PATHWAY</scope>
    <scope>TISSUE SPECIFICITY</scope>
    <scope>DEVELOPMENTAL STAGE</scope>
    <scope>BIOPHYSICOCHEMICAL PROPERTIES</scope>
</reference>
<feature type="signal peptide" evidence="4">
    <location>
        <begin position="1"/>
        <end status="unknown"/>
    </location>
</feature>
<feature type="chain" id="PRO_0000457209" description="Anthocyanidin 3-O-galactosyltransferase 3GT1" evidence="4">
    <location>
        <begin status="unknown"/>
        <end position="464"/>
    </location>
</feature>
<feature type="active site" description="Proton acceptor" evidence="1">
    <location>
        <position position="21"/>
    </location>
</feature>
<feature type="active site" description="Charge relay" evidence="1">
    <location>
        <position position="121"/>
    </location>
</feature>
<feature type="binding site" evidence="2">
    <location>
        <position position="19"/>
    </location>
    <ligand>
        <name>an anthocyanidin</name>
        <dbReference type="ChEBI" id="CHEBI:143576"/>
    </ligand>
</feature>
<feature type="binding site" evidence="2">
    <location>
        <position position="21"/>
    </location>
    <ligand>
        <name>an anthocyanidin</name>
        <dbReference type="ChEBI" id="CHEBI:143576"/>
    </ligand>
</feature>
<feature type="binding site" evidence="2">
    <location>
        <position position="152"/>
    </location>
    <ligand>
        <name>an anthocyanidin</name>
        <dbReference type="ChEBI" id="CHEBI:143576"/>
    </ligand>
</feature>
<feature type="binding site" evidence="1">
    <location>
        <position position="342"/>
    </location>
    <ligand>
        <name>UDP-alpha-D-glucose</name>
        <dbReference type="ChEBI" id="CHEBI:58885"/>
    </ligand>
</feature>
<feature type="binding site" evidence="1">
    <location>
        <position position="344"/>
    </location>
    <ligand>
        <name>UDP-alpha-D-glucose</name>
        <dbReference type="ChEBI" id="CHEBI:58885"/>
    </ligand>
</feature>
<feature type="binding site" evidence="1">
    <location>
        <position position="359"/>
    </location>
    <ligand>
        <name>UDP-alpha-D-glucose</name>
        <dbReference type="ChEBI" id="CHEBI:58885"/>
    </ligand>
</feature>
<feature type="binding site" evidence="1">
    <location>
        <position position="362"/>
    </location>
    <ligand>
        <name>UDP-alpha-D-glucose</name>
        <dbReference type="ChEBI" id="CHEBI:58885"/>
    </ligand>
</feature>
<feature type="binding site" evidence="1">
    <location>
        <position position="363"/>
    </location>
    <ligand>
        <name>UDP-alpha-D-glucose</name>
        <dbReference type="ChEBI" id="CHEBI:58885"/>
    </ligand>
</feature>
<feature type="binding site" evidence="1">
    <location>
        <position position="364"/>
    </location>
    <ligand>
        <name>UDP-alpha-D-glucose</name>
        <dbReference type="ChEBI" id="CHEBI:58885"/>
    </ligand>
</feature>
<feature type="binding site" evidence="1">
    <location>
        <position position="367"/>
    </location>
    <ligand>
        <name>UDP-alpha-D-glucose</name>
        <dbReference type="ChEBI" id="CHEBI:58885"/>
    </ligand>
</feature>
<feature type="binding site" evidence="2">
    <location>
        <position position="382"/>
    </location>
    <ligand>
        <name>an anthocyanidin</name>
        <dbReference type="ChEBI" id="CHEBI:143576"/>
    </ligand>
</feature>
<feature type="binding site" evidence="1">
    <location>
        <position position="383"/>
    </location>
    <ligand>
        <name>UDP-alpha-D-glucose</name>
        <dbReference type="ChEBI" id="CHEBI:58885"/>
    </ligand>
</feature>
<feature type="glycosylation site" description="N-linked (GlcNAc...) asparagine" evidence="5">
    <location>
        <position position="38"/>
    </location>
</feature>
<sequence>MTKNISRDRHVAVLPFPFSSHAGRLLTLVRRLAAAAPNVTFSFYSTPKSIESLFSPAERVPGNVRPYAVPDGVPEGHVFSGEPVEHVNLYLTAVGEGESLRGVLKAAEAETGRRIGCVMSDAFMWFAGDLAEEMGVPWVPFMAGGANSITAHFYTDLIRETVGMHDIVGRENDIVKFIPGFSELRLGDLPTGVLFGNLESPFAIMLHKMGRALPKATAIAINSFEELDPDIIQDLKSKFKMILNVSPFSAISLPSSPPPPPTSYTDEYGCMPWLDNRKAASVAYIGFGTLATPPPVEIAALAEALEASGTPFLWSLKDNPKEFFPEGFIKRTSERQKIVPWAPQEQVLAHGSVGVFVTHCGWNSALESIAAGVPLIGRPFFGDHQLNAWLVENVWKIGVRVEGGVFTKSGTMSALELVLTHEKQKELRARVEMFKKLALKAVGPEQSSTRNLHTLLEIVAGYNL</sequence>
<comment type="function">
    <text evidence="6">Flavonoid 3-O-glycosyltransferase involved in the biosynthesis of anthocyanins conferring flower red/pink colors, mainly anthocyanidin 3-O-glycosides (PubMed:35651780). Catalyzes the addition of UDP-sugar to the 3-OH of anthocyanidin, with a preference for UDP-galactose (UDP-Gal) as sugar donor and cyanidin as substrate; able to use delphinidin, pelargonidin, peonidin, malvidin and petunidin as substrates in the presence of UDP-Gal (PubMed:35651780). Can also use UDP-glucose (UDP-Glu) as sugar donor with delphinidin, cyanidin and malvidin as substrates, but not active on pelargonidin, peonidin and petunidin (PubMed:35651780).</text>
</comment>
<comment type="catalytic activity">
    <reaction evidence="6">
        <text>cyanidin + UDP-alpha-D-galactose = cyanidin 3-O-beta-D-galactoside + UDP + H(+)</text>
        <dbReference type="Rhea" id="RHEA:35631"/>
        <dbReference type="ChEBI" id="CHEBI:15378"/>
        <dbReference type="ChEBI" id="CHEBI:58223"/>
        <dbReference type="ChEBI" id="CHEBI:66914"/>
        <dbReference type="ChEBI" id="CHEBI:71682"/>
        <dbReference type="ChEBI" id="CHEBI:77935"/>
        <dbReference type="EC" id="2.4.1.294"/>
    </reaction>
    <physiologicalReaction direction="left-to-right" evidence="9">
        <dbReference type="Rhea" id="RHEA:35632"/>
    </physiologicalReaction>
</comment>
<comment type="catalytic activity">
    <reaction evidence="6">
        <text>cyanidin + UDP-alpha-D-glucose = cyanidin 3-O-beta-D-glucoside + UDP + H(+)</text>
        <dbReference type="Rhea" id="RHEA:60100"/>
        <dbReference type="ChEBI" id="CHEBI:15378"/>
        <dbReference type="ChEBI" id="CHEBI:58223"/>
        <dbReference type="ChEBI" id="CHEBI:58885"/>
        <dbReference type="ChEBI" id="CHEBI:71682"/>
        <dbReference type="ChEBI" id="CHEBI:77857"/>
        <dbReference type="EC" id="2.4.1.115"/>
    </reaction>
    <physiologicalReaction direction="left-to-right" evidence="9">
        <dbReference type="Rhea" id="RHEA:60101"/>
    </physiologicalReaction>
</comment>
<comment type="catalytic activity">
    <reaction evidence="6">
        <text>delphinidin + UDP-alpha-D-glucose = delphinidin 3-O-beta-D-glucoside + UDP</text>
        <dbReference type="Rhea" id="RHEA:61500"/>
        <dbReference type="ChEBI" id="CHEBI:58223"/>
        <dbReference type="ChEBI" id="CHEBI:58885"/>
        <dbReference type="ChEBI" id="CHEBI:144775"/>
        <dbReference type="ChEBI" id="CHEBI:144776"/>
        <dbReference type="EC" id="2.4.1.115"/>
    </reaction>
    <physiologicalReaction direction="left-to-right" evidence="9">
        <dbReference type="Rhea" id="RHEA:61501"/>
    </physiologicalReaction>
</comment>
<comment type="catalytic activity">
    <reaction evidence="6">
        <text>malvidin + UDP-alpha-D-glucose = malvidin 3-O-beta-D-glucoside + UDP</text>
        <dbReference type="Rhea" id="RHEA:61512"/>
        <dbReference type="ChEBI" id="CHEBI:58223"/>
        <dbReference type="ChEBI" id="CHEBI:58885"/>
        <dbReference type="ChEBI" id="CHEBI:144781"/>
        <dbReference type="ChEBI" id="CHEBI:144782"/>
    </reaction>
    <physiologicalReaction direction="left-to-right" evidence="9">
        <dbReference type="Rhea" id="RHEA:61513"/>
    </physiologicalReaction>
</comment>
<comment type="catalytic activity">
    <reaction evidence="6">
        <text>delphinidin + UDP-alpha-D-galactose = delphinidin 3-O-beta-D-galactoside + UDP + H(+)</text>
        <dbReference type="Rhea" id="RHEA:74119"/>
        <dbReference type="ChEBI" id="CHEBI:15378"/>
        <dbReference type="ChEBI" id="CHEBI:58223"/>
        <dbReference type="ChEBI" id="CHEBI:66914"/>
        <dbReference type="ChEBI" id="CHEBI:144775"/>
        <dbReference type="ChEBI" id="CHEBI:193097"/>
    </reaction>
    <physiologicalReaction direction="left-to-right" evidence="9">
        <dbReference type="Rhea" id="RHEA:74120"/>
    </physiologicalReaction>
</comment>
<comment type="catalytic activity">
    <reaction evidence="6">
        <text>pelargonidin + UDP-alpha-D-galactose = pelargonidin 3-O-beta-D-galactoside betaine + UDP</text>
        <dbReference type="Rhea" id="RHEA:74123"/>
        <dbReference type="ChEBI" id="CHEBI:58223"/>
        <dbReference type="ChEBI" id="CHEBI:66914"/>
        <dbReference type="ChEBI" id="CHEBI:144777"/>
        <dbReference type="ChEBI" id="CHEBI:193099"/>
    </reaction>
    <physiologicalReaction direction="left-to-right" evidence="9">
        <dbReference type="Rhea" id="RHEA:74124"/>
    </physiologicalReaction>
</comment>
<comment type="catalytic activity">
    <reaction evidence="6">
        <text>peonidin + UDP-alpha-D-galactose = peonidin 3-O-beta-D-galactoside + UDP</text>
        <dbReference type="Rhea" id="RHEA:74127"/>
        <dbReference type="ChEBI" id="CHEBI:58223"/>
        <dbReference type="ChEBI" id="CHEBI:66914"/>
        <dbReference type="ChEBI" id="CHEBI:144779"/>
        <dbReference type="ChEBI" id="CHEBI:193098"/>
    </reaction>
    <physiologicalReaction direction="left-to-right" evidence="9">
        <dbReference type="Rhea" id="RHEA:74128"/>
    </physiologicalReaction>
</comment>
<comment type="catalytic activity">
    <reaction evidence="6">
        <text>malvidin + UDP-alpha-D-galactose = malvidin 3-O-beta-D-galactoside + UDP + H(+)</text>
        <dbReference type="Rhea" id="RHEA:74131"/>
        <dbReference type="ChEBI" id="CHEBI:15378"/>
        <dbReference type="ChEBI" id="CHEBI:58223"/>
        <dbReference type="ChEBI" id="CHEBI:66914"/>
        <dbReference type="ChEBI" id="CHEBI:144781"/>
        <dbReference type="ChEBI" id="CHEBI:193100"/>
    </reaction>
    <physiologicalReaction direction="left-to-right" evidence="9">
        <dbReference type="Rhea" id="RHEA:74132"/>
    </physiologicalReaction>
</comment>
<comment type="catalytic activity">
    <reaction evidence="6">
        <text>petunidin + UDP-alpha-D-galactose = petunidin 3-O-beta-D-galactoside + UDP</text>
        <dbReference type="Rhea" id="RHEA:74135"/>
        <dbReference type="ChEBI" id="CHEBI:58223"/>
        <dbReference type="ChEBI" id="CHEBI:66914"/>
        <dbReference type="ChEBI" id="CHEBI:193101"/>
        <dbReference type="ChEBI" id="CHEBI:193102"/>
    </reaction>
    <physiologicalReaction direction="left-to-right" evidence="9">
        <dbReference type="Rhea" id="RHEA:74136"/>
    </physiologicalReaction>
</comment>
<comment type="catalytic activity">
    <reaction evidence="6">
        <text>an anthocyanidin + UDP-alpha-D-glucose + H(+) = an anthocyanidin 3-O-beta-D-glucoside + UDP</text>
        <dbReference type="Rhea" id="RHEA:20093"/>
        <dbReference type="ChEBI" id="CHEBI:15378"/>
        <dbReference type="ChEBI" id="CHEBI:16307"/>
        <dbReference type="ChEBI" id="CHEBI:58223"/>
        <dbReference type="ChEBI" id="CHEBI:58885"/>
        <dbReference type="ChEBI" id="CHEBI:143576"/>
        <dbReference type="EC" id="2.4.1.115"/>
    </reaction>
    <physiologicalReaction direction="left-to-right" evidence="9">
        <dbReference type="Rhea" id="RHEA:20094"/>
    </physiologicalReaction>
</comment>
<comment type="catalytic activity">
    <reaction evidence="6">
        <text>an anthocyanidin + UDP-alpha-D-galactose = an anthocyanidin 3-O-beta-D-galactoside + UDP</text>
        <dbReference type="Rhea" id="RHEA:74115"/>
        <dbReference type="ChEBI" id="CHEBI:58223"/>
        <dbReference type="ChEBI" id="CHEBI:66914"/>
        <dbReference type="ChEBI" id="CHEBI:143576"/>
        <dbReference type="ChEBI" id="CHEBI:193104"/>
    </reaction>
    <physiologicalReaction direction="left-to-right" evidence="9">
        <dbReference type="Rhea" id="RHEA:74116"/>
    </physiologicalReaction>
</comment>
<comment type="biophysicochemical properties">
    <phDependence>
        <text evidence="6">Optimum pH is 8.</text>
    </phDependence>
    <temperatureDependence>
        <text evidence="6">Optimum temperature is 30 degrees Celsius.</text>
    </temperatureDependence>
</comment>
<comment type="pathway">
    <text evidence="6">Pigment biosynthesis; anthocyanin biosynthesis.</text>
</comment>
<comment type="subunit">
    <text evidence="3">Monomer.</text>
</comment>
<comment type="tissue specificity">
    <text evidence="6">Mostly expressed in leaves and flowers and, to a lower extent, in roots (PubMed:35651780). In flowers, mainly observed in petals, toruses and scapes, and at lower levels in pistils and stamens (PubMed:35651780).</text>
</comment>
<comment type="developmental stage">
    <text evidence="6">In flowers, levels decrease slightly from stage 1 to stage 2 but increase progressively until stage 5.</text>
</comment>
<comment type="similarity">
    <text evidence="8">Belongs to the UDP-glycosyltransferase family.</text>
</comment>